<evidence type="ECO:0000255" key="1">
    <source>
        <dbReference type="HAMAP-Rule" id="MF_00170"/>
    </source>
</evidence>
<accession>A0KLT5</accession>
<reference key="1">
    <citation type="journal article" date="2006" name="J. Bacteriol.">
        <title>Genome sequence of Aeromonas hydrophila ATCC 7966T: jack of all trades.</title>
        <authorList>
            <person name="Seshadri R."/>
            <person name="Joseph S.W."/>
            <person name="Chopra A.K."/>
            <person name="Sha J."/>
            <person name="Shaw J."/>
            <person name="Graf J."/>
            <person name="Haft D.H."/>
            <person name="Wu M."/>
            <person name="Ren Q."/>
            <person name="Rosovitz M.J."/>
            <person name="Madupu R."/>
            <person name="Tallon L."/>
            <person name="Kim M."/>
            <person name="Jin S."/>
            <person name="Vuong H."/>
            <person name="Stine O.C."/>
            <person name="Ali A."/>
            <person name="Horneman A.J."/>
            <person name="Heidelberg J.F."/>
        </authorList>
    </citation>
    <scope>NUCLEOTIDE SEQUENCE [LARGE SCALE GENOMIC DNA]</scope>
    <source>
        <strain>ATCC 7966 / DSM 30187 / BCRC 13018 / CCUG 14551 / JCM 1027 / KCTC 2358 / NCIMB 9240 / NCTC 8049</strain>
    </source>
</reference>
<keyword id="KW-0413">Isomerase</keyword>
<keyword id="KW-1185">Reference proteome</keyword>
<proteinExistence type="inferred from homology"/>
<name>RPIA_AERHH</name>
<protein>
    <recommendedName>
        <fullName evidence="1">Ribose-5-phosphate isomerase A</fullName>
        <ecNumber evidence="1">5.3.1.6</ecNumber>
    </recommendedName>
    <alternativeName>
        <fullName evidence="1">Phosphoriboisomerase A</fullName>
        <shortName evidence="1">PRI</shortName>
    </alternativeName>
</protein>
<organism>
    <name type="scientific">Aeromonas hydrophila subsp. hydrophila (strain ATCC 7966 / DSM 30187 / BCRC 13018 / CCUG 14551 / JCM 1027 / KCTC 2358 / NCIMB 9240 / NCTC 8049)</name>
    <dbReference type="NCBI Taxonomy" id="380703"/>
    <lineage>
        <taxon>Bacteria</taxon>
        <taxon>Pseudomonadati</taxon>
        <taxon>Pseudomonadota</taxon>
        <taxon>Gammaproteobacteria</taxon>
        <taxon>Aeromonadales</taxon>
        <taxon>Aeromonadaceae</taxon>
        <taxon>Aeromonas</taxon>
    </lineage>
</organism>
<feature type="chain" id="PRO_1000016896" description="Ribose-5-phosphate isomerase A">
    <location>
        <begin position="1"/>
        <end position="217"/>
    </location>
</feature>
<feature type="active site" description="Proton acceptor" evidence="1">
    <location>
        <position position="103"/>
    </location>
</feature>
<feature type="binding site" evidence="1">
    <location>
        <begin position="28"/>
        <end position="31"/>
    </location>
    <ligand>
        <name>substrate</name>
    </ligand>
</feature>
<feature type="binding site" evidence="1">
    <location>
        <begin position="81"/>
        <end position="84"/>
    </location>
    <ligand>
        <name>substrate</name>
    </ligand>
</feature>
<feature type="binding site" evidence="1">
    <location>
        <begin position="94"/>
        <end position="97"/>
    </location>
    <ligand>
        <name>substrate</name>
    </ligand>
</feature>
<feature type="binding site" evidence="1">
    <location>
        <position position="121"/>
    </location>
    <ligand>
        <name>substrate</name>
    </ligand>
</feature>
<sequence length="217" mass="22882">MTQDEMKKAAGWAALKYVVPGTIVGVGTGSTVNHFIDALATMKDEIKGAVSSSVASTERLKGFGITVYDLNEIDALSVYVDGADEINGTRDMIKGGGAALTREKIVAAVADKFICIIDNTKTVDVLGTFPLPVEVIPMAREYVAREIRKLGGNPVWREGVVTDNGNHILDVKGMAITDAKGLEVQLNAIVGTVTNGLFAHRGADVVLIGTPDGVITQ</sequence>
<gene>
    <name evidence="1" type="primary">rpiA</name>
    <name type="ordered locus">AHA_2728</name>
</gene>
<dbReference type="EC" id="5.3.1.6" evidence="1"/>
<dbReference type="EMBL" id="CP000462">
    <property type="protein sequence ID" value="ABK39091.1"/>
    <property type="molecule type" value="Genomic_DNA"/>
</dbReference>
<dbReference type="RefSeq" id="WP_011706540.1">
    <property type="nucleotide sequence ID" value="NC_008570.1"/>
</dbReference>
<dbReference type="RefSeq" id="YP_857236.1">
    <property type="nucleotide sequence ID" value="NC_008570.1"/>
</dbReference>
<dbReference type="SMR" id="A0KLT5"/>
<dbReference type="STRING" id="380703.AHA_2728"/>
<dbReference type="EnsemblBacteria" id="ABK39091">
    <property type="protein sequence ID" value="ABK39091"/>
    <property type="gene ID" value="AHA_2728"/>
</dbReference>
<dbReference type="GeneID" id="4486937"/>
<dbReference type="KEGG" id="aha:AHA_2728"/>
<dbReference type="PATRIC" id="fig|380703.7.peg.2736"/>
<dbReference type="eggNOG" id="COG0120">
    <property type="taxonomic scope" value="Bacteria"/>
</dbReference>
<dbReference type="HOGENOM" id="CLU_056590_1_1_6"/>
<dbReference type="OrthoDB" id="5870696at2"/>
<dbReference type="UniPathway" id="UPA00115">
    <property type="reaction ID" value="UER00412"/>
</dbReference>
<dbReference type="Proteomes" id="UP000000756">
    <property type="component" value="Chromosome"/>
</dbReference>
<dbReference type="GO" id="GO:0005829">
    <property type="term" value="C:cytosol"/>
    <property type="evidence" value="ECO:0007669"/>
    <property type="project" value="TreeGrafter"/>
</dbReference>
<dbReference type="GO" id="GO:0004751">
    <property type="term" value="F:ribose-5-phosphate isomerase activity"/>
    <property type="evidence" value="ECO:0007669"/>
    <property type="project" value="UniProtKB-UniRule"/>
</dbReference>
<dbReference type="GO" id="GO:0006014">
    <property type="term" value="P:D-ribose metabolic process"/>
    <property type="evidence" value="ECO:0007669"/>
    <property type="project" value="TreeGrafter"/>
</dbReference>
<dbReference type="GO" id="GO:0009052">
    <property type="term" value="P:pentose-phosphate shunt, non-oxidative branch"/>
    <property type="evidence" value="ECO:0007669"/>
    <property type="project" value="UniProtKB-UniRule"/>
</dbReference>
<dbReference type="CDD" id="cd01398">
    <property type="entry name" value="RPI_A"/>
    <property type="match status" value="1"/>
</dbReference>
<dbReference type="FunFam" id="3.40.50.1360:FF:000001">
    <property type="entry name" value="Ribose-5-phosphate isomerase A"/>
    <property type="match status" value="1"/>
</dbReference>
<dbReference type="Gene3D" id="3.30.70.260">
    <property type="match status" value="1"/>
</dbReference>
<dbReference type="Gene3D" id="3.40.50.1360">
    <property type="match status" value="1"/>
</dbReference>
<dbReference type="HAMAP" id="MF_00170">
    <property type="entry name" value="Rib_5P_isom_A"/>
    <property type="match status" value="1"/>
</dbReference>
<dbReference type="InterPro" id="IPR037171">
    <property type="entry name" value="NagB/RpiA_transferase-like"/>
</dbReference>
<dbReference type="InterPro" id="IPR020672">
    <property type="entry name" value="Ribose5P_isomerase_typA_subgr"/>
</dbReference>
<dbReference type="InterPro" id="IPR004788">
    <property type="entry name" value="Ribose5P_isomerase_type_A"/>
</dbReference>
<dbReference type="NCBIfam" id="NF001924">
    <property type="entry name" value="PRK00702.1"/>
    <property type="match status" value="1"/>
</dbReference>
<dbReference type="NCBIfam" id="TIGR00021">
    <property type="entry name" value="rpiA"/>
    <property type="match status" value="1"/>
</dbReference>
<dbReference type="PANTHER" id="PTHR11934">
    <property type="entry name" value="RIBOSE-5-PHOSPHATE ISOMERASE"/>
    <property type="match status" value="1"/>
</dbReference>
<dbReference type="PANTHER" id="PTHR11934:SF0">
    <property type="entry name" value="RIBOSE-5-PHOSPHATE ISOMERASE"/>
    <property type="match status" value="1"/>
</dbReference>
<dbReference type="Pfam" id="PF06026">
    <property type="entry name" value="Rib_5-P_isom_A"/>
    <property type="match status" value="1"/>
</dbReference>
<dbReference type="SUPFAM" id="SSF75445">
    <property type="entry name" value="D-ribose-5-phosphate isomerase (RpiA), lid domain"/>
    <property type="match status" value="1"/>
</dbReference>
<dbReference type="SUPFAM" id="SSF100950">
    <property type="entry name" value="NagB/RpiA/CoA transferase-like"/>
    <property type="match status" value="1"/>
</dbReference>
<comment type="function">
    <text evidence="1">Catalyzes the reversible conversion of ribose-5-phosphate to ribulose 5-phosphate.</text>
</comment>
<comment type="catalytic activity">
    <reaction evidence="1">
        <text>aldehydo-D-ribose 5-phosphate = D-ribulose 5-phosphate</text>
        <dbReference type="Rhea" id="RHEA:14657"/>
        <dbReference type="ChEBI" id="CHEBI:58121"/>
        <dbReference type="ChEBI" id="CHEBI:58273"/>
        <dbReference type="EC" id="5.3.1.6"/>
    </reaction>
</comment>
<comment type="pathway">
    <text evidence="1">Carbohydrate degradation; pentose phosphate pathway; D-ribose 5-phosphate from D-ribulose 5-phosphate (non-oxidative stage): step 1/1.</text>
</comment>
<comment type="subunit">
    <text evidence="1">Homodimer.</text>
</comment>
<comment type="similarity">
    <text evidence="1">Belongs to the ribose 5-phosphate isomerase family.</text>
</comment>